<dbReference type="EC" id="2.7.11.25"/>
<dbReference type="EMBL" id="AK053843">
    <property type="protein sequence ID" value="BAC35552.1"/>
    <property type="molecule type" value="mRNA"/>
</dbReference>
<dbReference type="EMBL" id="AK155677">
    <property type="protein sequence ID" value="BAE33385.1"/>
    <property type="molecule type" value="mRNA"/>
</dbReference>
<dbReference type="EMBL" id="AC124595">
    <property type="status" value="NOT_ANNOTATED_CDS"/>
    <property type="molecule type" value="Genomic_DNA"/>
</dbReference>
<dbReference type="EMBL" id="AC125351">
    <property type="status" value="NOT_ANNOTATED_CDS"/>
    <property type="molecule type" value="Genomic_DNA"/>
</dbReference>
<dbReference type="CCDS" id="CCDS49104.1"/>
<dbReference type="RefSeq" id="NP_001167578.1">
    <property type="nucleotide sequence ID" value="NM_001174107.1"/>
</dbReference>
<dbReference type="RefSeq" id="NP_796369.2">
    <property type="nucleotide sequence ID" value="NM_177395.5"/>
</dbReference>
<dbReference type="SMR" id="Q3U1V8"/>
<dbReference type="BioGRID" id="237224">
    <property type="interactions" value="1"/>
</dbReference>
<dbReference type="FunCoup" id="Q3U1V8">
    <property type="interactions" value="1693"/>
</dbReference>
<dbReference type="IntAct" id="Q3U1V8">
    <property type="interactions" value="2"/>
</dbReference>
<dbReference type="STRING" id="10090.ENSMUSP00000041819"/>
<dbReference type="GlyGen" id="Q3U1V8">
    <property type="glycosylation" value="1 site"/>
</dbReference>
<dbReference type="iPTMnet" id="Q3U1V8"/>
<dbReference type="PhosphoSitePlus" id="Q3U1V8"/>
<dbReference type="PaxDb" id="10090-ENSMUSP00000041819"/>
<dbReference type="PeptideAtlas" id="Q3U1V8"/>
<dbReference type="ProteomicsDB" id="252701"/>
<dbReference type="Antibodypedia" id="75">
    <property type="antibodies" value="343 antibodies from 33 providers"/>
</dbReference>
<dbReference type="DNASU" id="338372"/>
<dbReference type="Ensembl" id="ENSMUST00000035987.9">
    <property type="protein sequence ID" value="ENSMUSP00000041819.8"/>
    <property type="gene ID" value="ENSMUSG00000042724.9"/>
</dbReference>
<dbReference type="GeneID" id="338372"/>
<dbReference type="KEGG" id="mmu:338372"/>
<dbReference type="UCSC" id="uc007oco.2">
    <property type="organism name" value="mouse"/>
</dbReference>
<dbReference type="AGR" id="MGI:2449952"/>
<dbReference type="CTD" id="4293"/>
<dbReference type="MGI" id="MGI:2449952">
    <property type="gene designation" value="Map3k9"/>
</dbReference>
<dbReference type="VEuPathDB" id="HostDB:ENSMUSG00000042724"/>
<dbReference type="eggNOG" id="KOG0192">
    <property type="taxonomic scope" value="Eukaryota"/>
</dbReference>
<dbReference type="GeneTree" id="ENSGT00940000158243"/>
<dbReference type="HOGENOM" id="CLU_000288_7_14_1"/>
<dbReference type="InParanoid" id="Q3U1V8"/>
<dbReference type="OrthoDB" id="339325at2759"/>
<dbReference type="PhylomeDB" id="Q3U1V8"/>
<dbReference type="TreeFam" id="TF105118"/>
<dbReference type="BioGRID-ORCS" id="338372">
    <property type="hits" value="1 hit in 80 CRISPR screens"/>
</dbReference>
<dbReference type="PRO" id="PR:Q3U1V8"/>
<dbReference type="Proteomes" id="UP000000589">
    <property type="component" value="Chromosome 12"/>
</dbReference>
<dbReference type="RNAct" id="Q3U1V8">
    <property type="molecule type" value="protein"/>
</dbReference>
<dbReference type="Bgee" id="ENSMUSG00000042724">
    <property type="expression patterns" value="Expressed in embryonic brain and 52 other cell types or tissues"/>
</dbReference>
<dbReference type="ExpressionAtlas" id="Q3U1V8">
    <property type="expression patterns" value="baseline and differential"/>
</dbReference>
<dbReference type="GO" id="GO:0005524">
    <property type="term" value="F:ATP binding"/>
    <property type="evidence" value="ECO:0007669"/>
    <property type="project" value="UniProtKB-KW"/>
</dbReference>
<dbReference type="GO" id="GO:0004709">
    <property type="term" value="F:MAP kinase kinase kinase activity"/>
    <property type="evidence" value="ECO:0007669"/>
    <property type="project" value="UniProtKB-EC"/>
</dbReference>
<dbReference type="GO" id="GO:0106310">
    <property type="term" value="F:protein serine kinase activity"/>
    <property type="evidence" value="ECO:0007669"/>
    <property type="project" value="RHEA"/>
</dbReference>
<dbReference type="GO" id="GO:0006915">
    <property type="term" value="P:apoptotic process"/>
    <property type="evidence" value="ECO:0007669"/>
    <property type="project" value="UniProtKB-KW"/>
</dbReference>
<dbReference type="CDD" id="cd12059">
    <property type="entry name" value="SH3_MLK1-3"/>
    <property type="match status" value="1"/>
</dbReference>
<dbReference type="CDD" id="cd14145">
    <property type="entry name" value="STKc_MLK1"/>
    <property type="match status" value="1"/>
</dbReference>
<dbReference type="FunFam" id="1.10.510.10:FF:000076">
    <property type="entry name" value="Mitogen-activated protein kinase kinase kinase"/>
    <property type="match status" value="1"/>
</dbReference>
<dbReference type="FunFam" id="2.30.30.40:FF:000079">
    <property type="entry name" value="Mitogen-activated protein kinase kinase kinase"/>
    <property type="match status" value="1"/>
</dbReference>
<dbReference type="FunFam" id="3.30.200.20:FF:000085">
    <property type="entry name" value="Mitogen-activated protein kinase kinase kinase"/>
    <property type="match status" value="1"/>
</dbReference>
<dbReference type="Gene3D" id="3.30.200.20">
    <property type="entry name" value="Phosphorylase Kinase, domain 1"/>
    <property type="match status" value="1"/>
</dbReference>
<dbReference type="Gene3D" id="2.30.30.40">
    <property type="entry name" value="SH3 Domains"/>
    <property type="match status" value="1"/>
</dbReference>
<dbReference type="Gene3D" id="1.10.510.10">
    <property type="entry name" value="Transferase(Phosphotransferase) domain 1"/>
    <property type="match status" value="1"/>
</dbReference>
<dbReference type="InterPro" id="IPR011009">
    <property type="entry name" value="Kinase-like_dom_sf"/>
</dbReference>
<dbReference type="InterPro" id="IPR035779">
    <property type="entry name" value="MLK1-3_SH3"/>
</dbReference>
<dbReference type="InterPro" id="IPR016231">
    <property type="entry name" value="MLK1-4"/>
</dbReference>
<dbReference type="InterPro" id="IPR000719">
    <property type="entry name" value="Prot_kinase_dom"/>
</dbReference>
<dbReference type="InterPro" id="IPR017441">
    <property type="entry name" value="Protein_kinase_ATP_BS"/>
</dbReference>
<dbReference type="InterPro" id="IPR001245">
    <property type="entry name" value="Ser-Thr/Tyr_kinase_cat_dom"/>
</dbReference>
<dbReference type="InterPro" id="IPR008271">
    <property type="entry name" value="Ser/Thr_kinase_AS"/>
</dbReference>
<dbReference type="InterPro" id="IPR051681">
    <property type="entry name" value="Ser/Thr_Kinases-Pseudokinases"/>
</dbReference>
<dbReference type="InterPro" id="IPR036028">
    <property type="entry name" value="SH3-like_dom_sf"/>
</dbReference>
<dbReference type="InterPro" id="IPR001452">
    <property type="entry name" value="SH3_domain"/>
</dbReference>
<dbReference type="PANTHER" id="PTHR44329:SF35">
    <property type="entry name" value="MITOGEN-ACTIVATED PROTEIN KINASE KINASE KINASE 9"/>
    <property type="match status" value="1"/>
</dbReference>
<dbReference type="PANTHER" id="PTHR44329">
    <property type="entry name" value="SERINE/THREONINE-PROTEIN KINASE TNNI3K-RELATED"/>
    <property type="match status" value="1"/>
</dbReference>
<dbReference type="Pfam" id="PF00069">
    <property type="entry name" value="Pkinase"/>
    <property type="match status" value="1"/>
</dbReference>
<dbReference type="Pfam" id="PF14604">
    <property type="entry name" value="SH3_9"/>
    <property type="match status" value="1"/>
</dbReference>
<dbReference type="PIRSF" id="PIRSF000556">
    <property type="entry name" value="MAPKKK9_11"/>
    <property type="match status" value="1"/>
</dbReference>
<dbReference type="PRINTS" id="PR00452">
    <property type="entry name" value="SH3DOMAIN"/>
</dbReference>
<dbReference type="PRINTS" id="PR00109">
    <property type="entry name" value="TYRKINASE"/>
</dbReference>
<dbReference type="SMART" id="SM00220">
    <property type="entry name" value="S_TKc"/>
    <property type="match status" value="1"/>
</dbReference>
<dbReference type="SMART" id="SM00326">
    <property type="entry name" value="SH3"/>
    <property type="match status" value="1"/>
</dbReference>
<dbReference type="SUPFAM" id="SSF56112">
    <property type="entry name" value="Protein kinase-like (PK-like)"/>
    <property type="match status" value="1"/>
</dbReference>
<dbReference type="SUPFAM" id="SSF50044">
    <property type="entry name" value="SH3-domain"/>
    <property type="match status" value="1"/>
</dbReference>
<dbReference type="PROSITE" id="PS00107">
    <property type="entry name" value="PROTEIN_KINASE_ATP"/>
    <property type="match status" value="1"/>
</dbReference>
<dbReference type="PROSITE" id="PS50011">
    <property type="entry name" value="PROTEIN_KINASE_DOM"/>
    <property type="match status" value="1"/>
</dbReference>
<dbReference type="PROSITE" id="PS00108">
    <property type="entry name" value="PROTEIN_KINASE_ST"/>
    <property type="match status" value="1"/>
</dbReference>
<dbReference type="PROSITE" id="PS50002">
    <property type="entry name" value="SH3"/>
    <property type="match status" value="1"/>
</dbReference>
<keyword id="KW-0053">Apoptosis</keyword>
<keyword id="KW-0067">ATP-binding</keyword>
<keyword id="KW-0418">Kinase</keyword>
<keyword id="KW-0547">Nucleotide-binding</keyword>
<keyword id="KW-0597">Phosphoprotein</keyword>
<keyword id="KW-1185">Reference proteome</keyword>
<keyword id="KW-0677">Repeat</keyword>
<keyword id="KW-0723">Serine/threonine-protein kinase</keyword>
<keyword id="KW-0728">SH3 domain</keyword>
<keyword id="KW-0346">Stress response</keyword>
<keyword id="KW-0804">Transcription</keyword>
<keyword id="KW-0805">Transcription regulation</keyword>
<keyword id="KW-0808">Transferase</keyword>
<reference key="1">
    <citation type="journal article" date="2005" name="Science">
        <title>The transcriptional landscape of the mammalian genome.</title>
        <authorList>
            <person name="Carninci P."/>
            <person name="Kasukawa T."/>
            <person name="Katayama S."/>
            <person name="Gough J."/>
            <person name="Frith M.C."/>
            <person name="Maeda N."/>
            <person name="Oyama R."/>
            <person name="Ravasi T."/>
            <person name="Lenhard B."/>
            <person name="Wells C."/>
            <person name="Kodzius R."/>
            <person name="Shimokawa K."/>
            <person name="Bajic V.B."/>
            <person name="Brenner S.E."/>
            <person name="Batalov S."/>
            <person name="Forrest A.R."/>
            <person name="Zavolan M."/>
            <person name="Davis M.J."/>
            <person name="Wilming L.G."/>
            <person name="Aidinis V."/>
            <person name="Allen J.E."/>
            <person name="Ambesi-Impiombato A."/>
            <person name="Apweiler R."/>
            <person name="Aturaliya R.N."/>
            <person name="Bailey T.L."/>
            <person name="Bansal M."/>
            <person name="Baxter L."/>
            <person name="Beisel K.W."/>
            <person name="Bersano T."/>
            <person name="Bono H."/>
            <person name="Chalk A.M."/>
            <person name="Chiu K.P."/>
            <person name="Choudhary V."/>
            <person name="Christoffels A."/>
            <person name="Clutterbuck D.R."/>
            <person name="Crowe M.L."/>
            <person name="Dalla E."/>
            <person name="Dalrymple B.P."/>
            <person name="de Bono B."/>
            <person name="Della Gatta G."/>
            <person name="di Bernardo D."/>
            <person name="Down T."/>
            <person name="Engstrom P."/>
            <person name="Fagiolini M."/>
            <person name="Faulkner G."/>
            <person name="Fletcher C.F."/>
            <person name="Fukushima T."/>
            <person name="Furuno M."/>
            <person name="Futaki S."/>
            <person name="Gariboldi M."/>
            <person name="Georgii-Hemming P."/>
            <person name="Gingeras T.R."/>
            <person name="Gojobori T."/>
            <person name="Green R.E."/>
            <person name="Gustincich S."/>
            <person name="Harbers M."/>
            <person name="Hayashi Y."/>
            <person name="Hensch T.K."/>
            <person name="Hirokawa N."/>
            <person name="Hill D."/>
            <person name="Huminiecki L."/>
            <person name="Iacono M."/>
            <person name="Ikeo K."/>
            <person name="Iwama A."/>
            <person name="Ishikawa T."/>
            <person name="Jakt M."/>
            <person name="Kanapin A."/>
            <person name="Katoh M."/>
            <person name="Kawasawa Y."/>
            <person name="Kelso J."/>
            <person name="Kitamura H."/>
            <person name="Kitano H."/>
            <person name="Kollias G."/>
            <person name="Krishnan S.P."/>
            <person name="Kruger A."/>
            <person name="Kummerfeld S.K."/>
            <person name="Kurochkin I.V."/>
            <person name="Lareau L.F."/>
            <person name="Lazarevic D."/>
            <person name="Lipovich L."/>
            <person name="Liu J."/>
            <person name="Liuni S."/>
            <person name="McWilliam S."/>
            <person name="Madan Babu M."/>
            <person name="Madera M."/>
            <person name="Marchionni L."/>
            <person name="Matsuda H."/>
            <person name="Matsuzawa S."/>
            <person name="Miki H."/>
            <person name="Mignone F."/>
            <person name="Miyake S."/>
            <person name="Morris K."/>
            <person name="Mottagui-Tabar S."/>
            <person name="Mulder N."/>
            <person name="Nakano N."/>
            <person name="Nakauchi H."/>
            <person name="Ng P."/>
            <person name="Nilsson R."/>
            <person name="Nishiguchi S."/>
            <person name="Nishikawa S."/>
            <person name="Nori F."/>
            <person name="Ohara O."/>
            <person name="Okazaki Y."/>
            <person name="Orlando V."/>
            <person name="Pang K.C."/>
            <person name="Pavan W.J."/>
            <person name="Pavesi G."/>
            <person name="Pesole G."/>
            <person name="Petrovsky N."/>
            <person name="Piazza S."/>
            <person name="Reed J."/>
            <person name="Reid J.F."/>
            <person name="Ring B.Z."/>
            <person name="Ringwald M."/>
            <person name="Rost B."/>
            <person name="Ruan Y."/>
            <person name="Salzberg S.L."/>
            <person name="Sandelin A."/>
            <person name="Schneider C."/>
            <person name="Schoenbach C."/>
            <person name="Sekiguchi K."/>
            <person name="Semple C.A."/>
            <person name="Seno S."/>
            <person name="Sessa L."/>
            <person name="Sheng Y."/>
            <person name="Shibata Y."/>
            <person name="Shimada H."/>
            <person name="Shimada K."/>
            <person name="Silva D."/>
            <person name="Sinclair B."/>
            <person name="Sperling S."/>
            <person name="Stupka E."/>
            <person name="Sugiura K."/>
            <person name="Sultana R."/>
            <person name="Takenaka Y."/>
            <person name="Taki K."/>
            <person name="Tammoja K."/>
            <person name="Tan S.L."/>
            <person name="Tang S."/>
            <person name="Taylor M.S."/>
            <person name="Tegner J."/>
            <person name="Teichmann S.A."/>
            <person name="Ueda H.R."/>
            <person name="van Nimwegen E."/>
            <person name="Verardo R."/>
            <person name="Wei C.L."/>
            <person name="Yagi K."/>
            <person name="Yamanishi H."/>
            <person name="Zabarovsky E."/>
            <person name="Zhu S."/>
            <person name="Zimmer A."/>
            <person name="Hide W."/>
            <person name="Bult C."/>
            <person name="Grimmond S.M."/>
            <person name="Teasdale R.D."/>
            <person name="Liu E.T."/>
            <person name="Brusic V."/>
            <person name="Quackenbush J."/>
            <person name="Wahlestedt C."/>
            <person name="Mattick J.S."/>
            <person name="Hume D.A."/>
            <person name="Kai C."/>
            <person name="Sasaki D."/>
            <person name="Tomaru Y."/>
            <person name="Fukuda S."/>
            <person name="Kanamori-Katayama M."/>
            <person name="Suzuki M."/>
            <person name="Aoki J."/>
            <person name="Arakawa T."/>
            <person name="Iida J."/>
            <person name="Imamura K."/>
            <person name="Itoh M."/>
            <person name="Kato T."/>
            <person name="Kawaji H."/>
            <person name="Kawagashira N."/>
            <person name="Kawashima T."/>
            <person name="Kojima M."/>
            <person name="Kondo S."/>
            <person name="Konno H."/>
            <person name="Nakano K."/>
            <person name="Ninomiya N."/>
            <person name="Nishio T."/>
            <person name="Okada M."/>
            <person name="Plessy C."/>
            <person name="Shibata K."/>
            <person name="Shiraki T."/>
            <person name="Suzuki S."/>
            <person name="Tagami M."/>
            <person name="Waki K."/>
            <person name="Watahiki A."/>
            <person name="Okamura-Oho Y."/>
            <person name="Suzuki H."/>
            <person name="Kawai J."/>
            <person name="Hayashizaki Y."/>
        </authorList>
    </citation>
    <scope>NUCLEOTIDE SEQUENCE [LARGE SCALE MRNA]</scope>
    <source>
        <strain>C57BL/6J</strain>
        <tissue>Eye</tissue>
    </source>
</reference>
<reference key="2">
    <citation type="journal article" date="2009" name="PLoS Biol.">
        <title>Lineage-specific biology revealed by a finished genome assembly of the mouse.</title>
        <authorList>
            <person name="Church D.M."/>
            <person name="Goodstadt L."/>
            <person name="Hillier L.W."/>
            <person name="Zody M.C."/>
            <person name="Goldstein S."/>
            <person name="She X."/>
            <person name="Bult C.J."/>
            <person name="Agarwala R."/>
            <person name="Cherry J.L."/>
            <person name="DiCuccio M."/>
            <person name="Hlavina W."/>
            <person name="Kapustin Y."/>
            <person name="Meric P."/>
            <person name="Maglott D."/>
            <person name="Birtle Z."/>
            <person name="Marques A.C."/>
            <person name="Graves T."/>
            <person name="Zhou S."/>
            <person name="Teague B."/>
            <person name="Potamousis K."/>
            <person name="Churas C."/>
            <person name="Place M."/>
            <person name="Herschleb J."/>
            <person name="Runnheim R."/>
            <person name="Forrest D."/>
            <person name="Amos-Landgraf J."/>
            <person name="Schwartz D.C."/>
            <person name="Cheng Z."/>
            <person name="Lindblad-Toh K."/>
            <person name="Eichler E.E."/>
            <person name="Ponting C.P."/>
        </authorList>
    </citation>
    <scope>NUCLEOTIDE SEQUENCE [LARGE SCALE GENOMIC DNA]</scope>
    <source>
        <strain>C57BL/6J</strain>
    </source>
</reference>
<reference key="3">
    <citation type="journal article" date="2010" name="Hear. Res.">
        <title>Ablation of mixed lineage kinase 3 (Mlk3) does not inhibit ototoxicity induced by acoustic trauma or aminoglycoside exposure.</title>
        <authorList>
            <person name="Polesskaya O."/>
            <person name="Cunningham L.L."/>
            <person name="Francis S.P."/>
            <person name="Luebke A.E."/>
            <person name="Zhu X."/>
            <person name="Collins D."/>
            <person name="Vasilyeva O.N."/>
            <person name="Sahler J."/>
            <person name="Desmet E.A."/>
            <person name="Gelbard H.A."/>
            <person name="Maggirwar S.B."/>
            <person name="Walton J.P."/>
            <person name="Frisina R.D. Jr."/>
            <person name="Dewhurst S."/>
        </authorList>
    </citation>
    <scope>TISSUE SPECIFICITY</scope>
</reference>
<accession>Q3U1V8</accession>
<accession>E9QLZ4</accession>
<accession>Q8BIG8</accession>
<proteinExistence type="evidence at transcript level"/>
<organism>
    <name type="scientific">Mus musculus</name>
    <name type="common">Mouse</name>
    <dbReference type="NCBI Taxonomy" id="10090"/>
    <lineage>
        <taxon>Eukaryota</taxon>
        <taxon>Metazoa</taxon>
        <taxon>Chordata</taxon>
        <taxon>Craniata</taxon>
        <taxon>Vertebrata</taxon>
        <taxon>Euteleostomi</taxon>
        <taxon>Mammalia</taxon>
        <taxon>Eutheria</taxon>
        <taxon>Euarchontoglires</taxon>
        <taxon>Glires</taxon>
        <taxon>Rodentia</taxon>
        <taxon>Myomorpha</taxon>
        <taxon>Muroidea</taxon>
        <taxon>Muridae</taxon>
        <taxon>Murinae</taxon>
        <taxon>Mus</taxon>
        <taxon>Mus</taxon>
    </lineage>
</organism>
<evidence type="ECO:0000250" key="1"/>
<evidence type="ECO:0000250" key="2">
    <source>
        <dbReference type="UniProtKB" id="P80192"/>
    </source>
</evidence>
<evidence type="ECO:0000255" key="3">
    <source>
        <dbReference type="PROSITE-ProRule" id="PRU00159"/>
    </source>
</evidence>
<evidence type="ECO:0000255" key="4">
    <source>
        <dbReference type="PROSITE-ProRule" id="PRU00192"/>
    </source>
</evidence>
<evidence type="ECO:0000255" key="5">
    <source>
        <dbReference type="PROSITE-ProRule" id="PRU10027"/>
    </source>
</evidence>
<evidence type="ECO:0000256" key="6">
    <source>
        <dbReference type="SAM" id="MobiDB-lite"/>
    </source>
</evidence>
<evidence type="ECO:0000269" key="7">
    <source>
    </source>
</evidence>
<evidence type="ECO:0000305" key="8"/>
<comment type="function">
    <text evidence="1">Serine/threonine kinase which acts as an essential component of the MAP kinase signal transduction pathway. Plays an important role in the cascades of cellular responses evoked by changes in the environment. Once activated, acts as an upstream activator of the MKK/JNK signal transduction cascade through the phosphorylation of MAP2K4/MKK4 and MAP2K7/MKK7 which in turn activate the JNKs. The MKK/JNK signaling pathway regulates stress response via activator protein-1 (JUN) and GATA4 transcription factors. Also plays a role in mitochondrial death signaling pathway, including the release cytochrome c, leading to apoptosis (By similarity).</text>
</comment>
<comment type="catalytic activity">
    <reaction>
        <text>L-seryl-[protein] + ATP = O-phospho-L-seryl-[protein] + ADP + H(+)</text>
        <dbReference type="Rhea" id="RHEA:17989"/>
        <dbReference type="Rhea" id="RHEA-COMP:9863"/>
        <dbReference type="Rhea" id="RHEA-COMP:11604"/>
        <dbReference type="ChEBI" id="CHEBI:15378"/>
        <dbReference type="ChEBI" id="CHEBI:29999"/>
        <dbReference type="ChEBI" id="CHEBI:30616"/>
        <dbReference type="ChEBI" id="CHEBI:83421"/>
        <dbReference type="ChEBI" id="CHEBI:456216"/>
        <dbReference type="EC" id="2.7.11.25"/>
    </reaction>
</comment>
<comment type="catalytic activity">
    <reaction>
        <text>L-threonyl-[protein] + ATP = O-phospho-L-threonyl-[protein] + ADP + H(+)</text>
        <dbReference type="Rhea" id="RHEA:46608"/>
        <dbReference type="Rhea" id="RHEA-COMP:11060"/>
        <dbReference type="Rhea" id="RHEA-COMP:11605"/>
        <dbReference type="ChEBI" id="CHEBI:15378"/>
        <dbReference type="ChEBI" id="CHEBI:30013"/>
        <dbReference type="ChEBI" id="CHEBI:30616"/>
        <dbReference type="ChEBI" id="CHEBI:61977"/>
        <dbReference type="ChEBI" id="CHEBI:456216"/>
        <dbReference type="EC" id="2.7.11.25"/>
    </reaction>
</comment>
<comment type="cofactor">
    <cofactor evidence="1">
        <name>Mg(2+)</name>
        <dbReference type="ChEBI" id="CHEBI:18420"/>
    </cofactor>
</comment>
<comment type="activity regulation">
    <text evidence="1">Homodimerization via the leucine zipper domains is required for autophosphorylation of multiple sites in the activation loop and subsequent activation. Autophosphorylation at Thr-305 is the key step in activation of MAP3K9/MLK1 and is required for full phosphorylation. Autophosphorylation at Thr-297 and Ser-301 have been shown to be of secondary importance in the activation of MAP3K9/MLK1.</text>
</comment>
<comment type="subunit">
    <text evidence="1">Homodimer.</text>
</comment>
<comment type="tissue specificity">
    <text evidence="7">Expressed in cochlea and utricle.</text>
</comment>
<comment type="PTM">
    <text evidence="1">Autophosphorylation on serine and threonine residues within the activation loop plays a role in enzyme activation. Thr-305 is likely to be the main autophosphorylation site (By similarity). Autophosphorylation also occurs on Thr-297 and Ser-301 (By similarity).</text>
</comment>
<comment type="similarity">
    <text evidence="8">Belongs to the protein kinase superfamily. STE Ser/Thr protein kinase family. MAP kinase kinase kinase subfamily.</text>
</comment>
<protein>
    <recommendedName>
        <fullName>Mitogen-activated protein kinase kinase kinase 9</fullName>
        <ecNumber>2.7.11.25</ecNumber>
    </recommendedName>
</protein>
<feature type="chain" id="PRO_0000277825" description="Mitogen-activated protein kinase kinase kinase 9">
    <location>
        <begin position="1"/>
        <end position="1077"/>
    </location>
</feature>
<feature type="domain" description="SH3" evidence="4">
    <location>
        <begin position="45"/>
        <end position="109"/>
    </location>
</feature>
<feature type="domain" description="Protein kinase" evidence="3">
    <location>
        <begin position="137"/>
        <end position="405"/>
    </location>
</feature>
<feature type="region of interest" description="Disordered" evidence="6">
    <location>
        <begin position="1"/>
        <end position="40"/>
    </location>
</feature>
<feature type="region of interest" description="Leucine-zipper 1">
    <location>
        <begin position="423"/>
        <end position="444"/>
    </location>
</feature>
<feature type="region of interest" description="Leucine-zipper 2">
    <location>
        <begin position="458"/>
        <end position="479"/>
    </location>
</feature>
<feature type="region of interest" description="Disordered" evidence="6">
    <location>
        <begin position="491"/>
        <end position="511"/>
    </location>
</feature>
<feature type="region of interest" description="Disordered" evidence="6">
    <location>
        <begin position="526"/>
        <end position="606"/>
    </location>
</feature>
<feature type="region of interest" description="Disordered" evidence="6">
    <location>
        <begin position="646"/>
        <end position="713"/>
    </location>
</feature>
<feature type="region of interest" description="Disordered" evidence="6">
    <location>
        <begin position="748"/>
        <end position="790"/>
    </location>
</feature>
<feature type="region of interest" description="Disordered" evidence="6">
    <location>
        <begin position="860"/>
        <end position="971"/>
    </location>
</feature>
<feature type="region of interest" description="Disordered" evidence="6">
    <location>
        <begin position="986"/>
        <end position="1011"/>
    </location>
</feature>
<feature type="compositionally biased region" description="Low complexity" evidence="6">
    <location>
        <begin position="14"/>
        <end position="27"/>
    </location>
</feature>
<feature type="compositionally biased region" description="Acidic residues" evidence="6">
    <location>
        <begin position="28"/>
        <end position="38"/>
    </location>
</feature>
<feature type="compositionally biased region" description="Basic residues" evidence="6">
    <location>
        <begin position="491"/>
        <end position="503"/>
    </location>
</feature>
<feature type="compositionally biased region" description="Polar residues" evidence="6">
    <location>
        <begin position="559"/>
        <end position="568"/>
    </location>
</feature>
<feature type="compositionally biased region" description="Polar residues" evidence="6">
    <location>
        <begin position="693"/>
        <end position="709"/>
    </location>
</feature>
<feature type="compositionally biased region" description="Basic and acidic residues" evidence="6">
    <location>
        <begin position="755"/>
        <end position="767"/>
    </location>
</feature>
<feature type="compositionally biased region" description="Polar residues" evidence="6">
    <location>
        <begin position="863"/>
        <end position="880"/>
    </location>
</feature>
<feature type="compositionally biased region" description="Low complexity" evidence="6">
    <location>
        <begin position="901"/>
        <end position="915"/>
    </location>
</feature>
<feature type="compositionally biased region" description="Polar residues" evidence="6">
    <location>
        <begin position="987"/>
        <end position="1011"/>
    </location>
</feature>
<feature type="active site" description="Proton acceptor" evidence="3 5">
    <location>
        <position position="261"/>
    </location>
</feature>
<feature type="binding site" evidence="3">
    <location>
        <begin position="143"/>
        <end position="151"/>
    </location>
    <ligand>
        <name>ATP</name>
        <dbReference type="ChEBI" id="CHEBI:30616"/>
    </ligand>
</feature>
<feature type="binding site" evidence="3">
    <location>
        <position position="164"/>
    </location>
    <ligand>
        <name>ATP</name>
        <dbReference type="ChEBI" id="CHEBI:30616"/>
    </ligand>
</feature>
<feature type="modified residue" description="Phosphothreonine; by autocatalysis" evidence="2">
    <location>
        <position position="297"/>
    </location>
</feature>
<feature type="modified residue" description="Phosphothreonine; by autocatalysis" evidence="2">
    <location>
        <position position="298"/>
    </location>
</feature>
<feature type="modified residue" description="Phosphoserine; by autocatalysis" evidence="2">
    <location>
        <position position="301"/>
    </location>
</feature>
<feature type="modified residue" description="Phosphothreonine; by autocatalysis" evidence="2">
    <location>
        <position position="305"/>
    </location>
</feature>
<feature type="modified residue" description="Phosphoserine" evidence="2">
    <location>
        <position position="526"/>
    </location>
</feature>
<feature type="sequence conflict" description="In Ref. 1; BAC35552." evidence="8" ref="1">
    <original>Q</original>
    <variation>K</variation>
    <location>
        <position position="176"/>
    </location>
</feature>
<feature type="sequence conflict" description="In Ref. 1; BAE33385." evidence="8" ref="1">
    <original>K</original>
    <variation>E</variation>
    <location>
        <position position="284"/>
    </location>
</feature>
<sequence>MESSRSLLGCLASATAAPPGDDATGAGAEEEEDEEEAAAELGSHAALPYWTAVFEYEAAGEDELTLRLGDVVEVLSKDSQVSGDEGWWTGQLNQRVGIFPSNYVTPRSAFSSRCQPGAEDPSCYPPIQLLEIDFAELTLEEIIGIGGFGKVYRAFWAGDEVAVKAARHDPDEDISQTIENVRQEAKLFAMLKHPNIIALRGVCLKEPNLCLVMEFARGGPLNRVLSGKRIPPDILVNWAVQIARGMNYLHDEAIVPIIHRDLKSSNILILQKVENGDLSNKILKITDFGLAREWHRTTKMSAAGTYAWMAPEVIRASMFSKGSDVWSYGVLLWELLTGEVPFRGIDGLAVAYGVAMNKLALPIPSTCPEPFAKLMEDCWNPDPHSRPSFTSILDQLTTIEESGFFEMPKDSFHCLQDDWKHEIQEMFDQLRAKEKELRTWEEELTRAALQQKNQEELLRRREQELAEREIDILERELNIIIHQLCQEKPRVKKRKGKFRKSRLKLKDGNRISLPSDFQHKFTVQASPTMDKRKSLISNRSSPPASPTIIPRLRAIQLTPGESSKTWGRSSVVPKEEGEEEEKRAPKKKGRTWGPGTLGQKELTSGDEGLKSLVDGYKQWSSSAPNLGKGPRSSPALPGFTSLMEIEDEDSEGPGSGENHQQHSPNQSYLCIPFPRGEDGDGPSSDGVHEEPTPVNSATSTPQLTPTNSLKRGGTHHRRCEVALLGCGAVLAATGLGFDLLEAGKCQLLPPEEPEPPAREEKKRREGLFQRASRPRRSTSPPSRKLFKKEEPMTLLGDPSASLTLLSLSSISECNSTRSLLRSDSDEIVVYEMPVSPVEAPPLTQCTHNPLVNVRVERFKRDPNQSLTPTHVTLTAPTQPSGHRRTPSDGALKPTAAPAVLGSRSPSSNGMSPSPGTGMLKTPSPSRDPGEFPRLPDPNVVFPPTPRRWNTQRDSTLERPKTLEFLPRPRPSANRQRLDPWWFVSPSHARSASPANSSSTETPSNLDSCFASSSSTVEERPGLPALLPLQAGPLLPAERTLLDLDAEGQSQDSTVPLCRAELNAHGPSPYEIQQEFWS</sequence>
<gene>
    <name type="primary">Map3k9</name>
</gene>
<name>M3K9_MOUSE</name>